<organism>
    <name type="scientific">Pseudomonas aeruginosa (strain ATCC 15692 / DSM 22644 / CIP 104116 / JCM 14847 / LMG 12228 / 1C / PRS 101 / PAO1)</name>
    <dbReference type="NCBI Taxonomy" id="208964"/>
    <lineage>
        <taxon>Bacteria</taxon>
        <taxon>Pseudomonadati</taxon>
        <taxon>Pseudomonadota</taxon>
        <taxon>Gammaproteobacteria</taxon>
        <taxon>Pseudomonadales</taxon>
        <taxon>Pseudomonadaceae</taxon>
        <taxon>Pseudomonas</taxon>
    </lineage>
</organism>
<name>BAME_PSEAE</name>
<gene>
    <name evidence="1" type="primary">bamE</name>
    <name type="synonym">omlA</name>
    <name type="synonym">oprX</name>
    <name type="ordered locus">PA4765</name>
</gene>
<feature type="signal peptide">
    <location>
        <begin position="1"/>
        <end position="21"/>
    </location>
</feature>
<feature type="chain" id="PRO_0000032815" description="Outer membrane protein assembly factor BamE">
    <location>
        <begin position="22"/>
        <end position="176"/>
    </location>
</feature>
<feature type="region of interest" description="Disordered" evidence="2">
    <location>
        <begin position="121"/>
        <end position="176"/>
    </location>
</feature>
<feature type="compositionally biased region" description="Polar residues" evidence="2">
    <location>
        <begin position="123"/>
        <end position="132"/>
    </location>
</feature>
<feature type="compositionally biased region" description="Basic and acidic residues" evidence="2">
    <location>
        <begin position="134"/>
        <end position="144"/>
    </location>
</feature>
<feature type="compositionally biased region" description="Pro residues" evidence="2">
    <location>
        <begin position="163"/>
        <end position="176"/>
    </location>
</feature>
<feature type="lipid moiety-binding region" description="N-palmitoyl cysteine" evidence="1">
    <location>
        <position position="22"/>
    </location>
</feature>
<feature type="lipid moiety-binding region" description="S-diacylglycerol cysteine" evidence="1">
    <location>
        <position position="22"/>
    </location>
</feature>
<feature type="helix" evidence="4">
    <location>
        <begin position="40"/>
        <end position="44"/>
    </location>
</feature>
<feature type="helix" evidence="4">
    <location>
        <begin position="52"/>
        <end position="59"/>
    </location>
</feature>
<feature type="strand" evidence="4">
    <location>
        <begin position="63"/>
        <end position="80"/>
    </location>
</feature>
<feature type="helix" evidence="4">
    <location>
        <begin position="85"/>
        <end position="87"/>
    </location>
</feature>
<feature type="strand" evidence="4">
    <location>
        <begin position="89"/>
        <end position="95"/>
    </location>
</feature>
<feature type="strand" evidence="4">
    <location>
        <begin position="99"/>
        <end position="106"/>
    </location>
</feature>
<keyword id="KW-0002">3D-structure</keyword>
<keyword id="KW-0998">Cell outer membrane</keyword>
<keyword id="KW-0449">Lipoprotein</keyword>
<keyword id="KW-0472">Membrane</keyword>
<keyword id="KW-0564">Palmitate</keyword>
<keyword id="KW-1185">Reference proteome</keyword>
<keyword id="KW-0732">Signal</keyword>
<proteinExistence type="evidence at protein level"/>
<comment type="function">
    <text evidence="1 3">Part of the outer membrane protein assembly complex, which is involved in assembly and insertion of beta-barrel proteins into the outer membrane (By similarity). May have a structural role in maintaining the cell envelope integrity.</text>
</comment>
<comment type="subunit">
    <text evidence="1">Part of the Bam complex.</text>
</comment>
<comment type="subcellular location">
    <subcellularLocation>
        <location>Cell outer membrane</location>
        <topology>Lipid-anchor</topology>
    </subcellularLocation>
</comment>
<comment type="similarity">
    <text evidence="1">Belongs to the BamE family.</text>
</comment>
<sequence>MQNAKLMLTCLAFAGLAALAGCSFPGVYKIDIQQGNVVTQDMIDQLRPGMTRRQVRFIMGNPLIVDTFHANRWDYLYSIQPGGGRRQQERVSLFFNDSDQLAGLNGDFMPGVSRDEAILGKEGSTTVTQPADQQKPEAQKEEPPKPGSTLEQLQREVDEAQPVPVPTPEPLDPSPQ</sequence>
<protein>
    <recommendedName>
        <fullName evidence="1">Outer membrane protein assembly factor BamE</fullName>
    </recommendedName>
</protein>
<accession>O68562</accession>
<dbReference type="EMBL" id="AF050676">
    <property type="protein sequence ID" value="AAC05678.1"/>
    <property type="molecule type" value="Genomic_DNA"/>
</dbReference>
<dbReference type="EMBL" id="AE004091">
    <property type="protein sequence ID" value="AAG08151.1"/>
    <property type="molecule type" value="Genomic_DNA"/>
</dbReference>
<dbReference type="PIR" id="A83050">
    <property type="entry name" value="A83050"/>
</dbReference>
<dbReference type="RefSeq" id="NP_253453.1">
    <property type="nucleotide sequence ID" value="NC_002516.2"/>
</dbReference>
<dbReference type="RefSeq" id="WP_003113904.1">
    <property type="nucleotide sequence ID" value="NZ_QZGE01000018.1"/>
</dbReference>
<dbReference type="PDB" id="7JRK">
    <property type="method" value="X-ray"/>
    <property type="resolution" value="1.71 A"/>
    <property type="chains" value="A/B=23-176"/>
</dbReference>
<dbReference type="PDBsum" id="7JRK"/>
<dbReference type="SMR" id="O68562"/>
<dbReference type="FunCoup" id="O68562">
    <property type="interactions" value="57"/>
</dbReference>
<dbReference type="STRING" id="208964.PA4765"/>
<dbReference type="PaxDb" id="208964-PA4765"/>
<dbReference type="GeneID" id="881781"/>
<dbReference type="KEGG" id="pae:PA4765"/>
<dbReference type="PATRIC" id="fig|208964.12.peg.4992"/>
<dbReference type="PseudoCAP" id="PA4765"/>
<dbReference type="HOGENOM" id="CLU_083835_2_1_6"/>
<dbReference type="InParanoid" id="O68562"/>
<dbReference type="OrthoDB" id="9808250at2"/>
<dbReference type="PhylomeDB" id="O68562"/>
<dbReference type="BioCyc" id="PAER208964:G1FZ6-4878-MONOMER"/>
<dbReference type="Proteomes" id="UP000002438">
    <property type="component" value="Chromosome"/>
</dbReference>
<dbReference type="GO" id="GO:1990063">
    <property type="term" value="C:Bam protein complex"/>
    <property type="evidence" value="ECO:0000318"/>
    <property type="project" value="GO_Central"/>
</dbReference>
<dbReference type="GO" id="GO:0030674">
    <property type="term" value="F:protein-macromolecule adaptor activity"/>
    <property type="evidence" value="ECO:0000318"/>
    <property type="project" value="GO_Central"/>
</dbReference>
<dbReference type="GO" id="GO:0043165">
    <property type="term" value="P:Gram-negative-bacterium-type cell outer membrane assembly"/>
    <property type="evidence" value="ECO:0000318"/>
    <property type="project" value="GO_Central"/>
</dbReference>
<dbReference type="GO" id="GO:0051205">
    <property type="term" value="P:protein insertion into membrane"/>
    <property type="evidence" value="ECO:0000318"/>
    <property type="project" value="GO_Central"/>
</dbReference>
<dbReference type="Gene3D" id="3.30.1450.10">
    <property type="match status" value="1"/>
</dbReference>
<dbReference type="HAMAP" id="MF_00925">
    <property type="entry name" value="OM_assembly_BamE"/>
    <property type="match status" value="1"/>
</dbReference>
<dbReference type="InterPro" id="IPR026592">
    <property type="entry name" value="BamE"/>
</dbReference>
<dbReference type="InterPro" id="IPR037873">
    <property type="entry name" value="BamE-like"/>
</dbReference>
<dbReference type="InterPro" id="IPR007450">
    <property type="entry name" value="BamE_dom"/>
</dbReference>
<dbReference type="PANTHER" id="PTHR37482">
    <property type="entry name" value="OUTER MEMBRANE PROTEIN ASSEMBLY FACTOR BAME"/>
    <property type="match status" value="1"/>
</dbReference>
<dbReference type="PANTHER" id="PTHR37482:SF1">
    <property type="entry name" value="OUTER MEMBRANE PROTEIN ASSEMBLY FACTOR BAME"/>
    <property type="match status" value="1"/>
</dbReference>
<dbReference type="Pfam" id="PF04355">
    <property type="entry name" value="BamE"/>
    <property type="match status" value="1"/>
</dbReference>
<dbReference type="PROSITE" id="PS51257">
    <property type="entry name" value="PROKAR_LIPOPROTEIN"/>
    <property type="match status" value="1"/>
</dbReference>
<reference key="1">
    <citation type="journal article" date="1999" name="J. Bacteriol.">
        <title>Pseudomonas aeruginosa fur overlaps with a gene encoding a novel outer membrane lipoprotein, OmlA.</title>
        <authorList>
            <person name="Ochsner U.A."/>
            <person name="Vasil A.I."/>
            <person name="Johnson Z."/>
            <person name="Vasil M.L."/>
        </authorList>
    </citation>
    <scope>NUCLEOTIDE SEQUENCE [GENOMIC DNA]</scope>
    <scope>FUNCTION</scope>
    <source>
        <strain>ATCC 15692 / DSM 22644 / CIP 104116 / JCM 14847 / LMG 12228 / 1C / PRS 101 / PAO1</strain>
    </source>
</reference>
<reference key="2">
    <citation type="journal article" date="2000" name="Nature">
        <title>Complete genome sequence of Pseudomonas aeruginosa PAO1, an opportunistic pathogen.</title>
        <authorList>
            <person name="Stover C.K."/>
            <person name="Pham X.-Q.T."/>
            <person name="Erwin A.L."/>
            <person name="Mizoguchi S.D."/>
            <person name="Warrener P."/>
            <person name="Hickey M.J."/>
            <person name="Brinkman F.S.L."/>
            <person name="Hufnagle W.O."/>
            <person name="Kowalik D.J."/>
            <person name="Lagrou M."/>
            <person name="Garber R.L."/>
            <person name="Goltry L."/>
            <person name="Tolentino E."/>
            <person name="Westbrock-Wadman S."/>
            <person name="Yuan Y."/>
            <person name="Brody L.L."/>
            <person name="Coulter S.N."/>
            <person name="Folger K.R."/>
            <person name="Kas A."/>
            <person name="Larbig K."/>
            <person name="Lim R.M."/>
            <person name="Smith K.A."/>
            <person name="Spencer D.H."/>
            <person name="Wong G.K.-S."/>
            <person name="Wu Z."/>
            <person name="Paulsen I.T."/>
            <person name="Reizer J."/>
            <person name="Saier M.H. Jr."/>
            <person name="Hancock R.E.W."/>
            <person name="Lory S."/>
            <person name="Olson M.V."/>
        </authorList>
    </citation>
    <scope>NUCLEOTIDE SEQUENCE [LARGE SCALE GENOMIC DNA]</scope>
    <source>
        <strain>ATCC 15692 / DSM 22644 / CIP 104116 / JCM 14847 / LMG 12228 / 1C / PRS 101 / PAO1</strain>
    </source>
</reference>
<evidence type="ECO:0000255" key="1">
    <source>
        <dbReference type="HAMAP-Rule" id="MF_00925"/>
    </source>
</evidence>
<evidence type="ECO:0000256" key="2">
    <source>
        <dbReference type="SAM" id="MobiDB-lite"/>
    </source>
</evidence>
<evidence type="ECO:0000269" key="3">
    <source>
    </source>
</evidence>
<evidence type="ECO:0007829" key="4">
    <source>
        <dbReference type="PDB" id="7JRK"/>
    </source>
</evidence>